<protein>
    <recommendedName>
        <fullName>Probable lipid phosphate phosphatase 4</fullName>
        <shortName>AtLPP4</shortName>
        <ecNumber>3.1.3.-</ecNumber>
    </recommendedName>
    <alternativeName>
        <fullName>Phosphatidic acid phosphatase 4</fullName>
        <shortName>AtPAP4</shortName>
    </alternativeName>
</protein>
<keyword id="KW-0378">Hydrolase</keyword>
<keyword id="KW-0472">Membrane</keyword>
<keyword id="KW-1185">Reference proteome</keyword>
<keyword id="KW-0812">Transmembrane</keyword>
<keyword id="KW-1133">Transmembrane helix</keyword>
<comment type="subcellular location">
    <subcellularLocation>
        <location evidence="3">Membrane</location>
        <topology evidence="3">Multi-pass membrane protein</topology>
    </subcellularLocation>
</comment>
<comment type="similarity">
    <text evidence="3">Belongs to the PA-phosphatase related phosphoesterase family.</text>
</comment>
<dbReference type="EC" id="3.1.3.-"/>
<dbReference type="EMBL" id="AP000414">
    <property type="protein sequence ID" value="BAB01172.1"/>
    <property type="molecule type" value="Genomic_DNA"/>
</dbReference>
<dbReference type="EMBL" id="CP002686">
    <property type="protein sequence ID" value="AEE76067.1"/>
    <property type="molecule type" value="Genomic_DNA"/>
</dbReference>
<dbReference type="EMBL" id="AK229475">
    <property type="protein sequence ID" value="BAF01333.1"/>
    <property type="molecule type" value="mRNA"/>
</dbReference>
<dbReference type="EMBL" id="AY087632">
    <property type="protein sequence ID" value="AAM65171.1"/>
    <property type="molecule type" value="mRNA"/>
</dbReference>
<dbReference type="RefSeq" id="NP_566602.1">
    <property type="nucleotide sequence ID" value="NM_112706.3"/>
</dbReference>
<dbReference type="FunCoup" id="Q0WNG6">
    <property type="interactions" value="1421"/>
</dbReference>
<dbReference type="STRING" id="3702.Q0WNG6"/>
<dbReference type="PaxDb" id="3702-AT3G18220.1"/>
<dbReference type="ProteomicsDB" id="238445"/>
<dbReference type="EnsemblPlants" id="AT3G18220.1">
    <property type="protein sequence ID" value="AT3G18220.1"/>
    <property type="gene ID" value="AT3G18220"/>
</dbReference>
<dbReference type="GeneID" id="821350"/>
<dbReference type="Gramene" id="AT3G18220.1">
    <property type="protein sequence ID" value="AT3G18220.1"/>
    <property type="gene ID" value="AT3G18220"/>
</dbReference>
<dbReference type="KEGG" id="ath:AT3G18220"/>
<dbReference type="Araport" id="AT3G18220"/>
<dbReference type="TAIR" id="AT3G18220">
    <property type="gene designation" value="LPP4"/>
</dbReference>
<dbReference type="eggNOG" id="KOG3030">
    <property type="taxonomic scope" value="Eukaryota"/>
</dbReference>
<dbReference type="HOGENOM" id="CLU_021458_5_1_1"/>
<dbReference type="InParanoid" id="Q0WNG6"/>
<dbReference type="OMA" id="EDTIPMW"/>
<dbReference type="PhylomeDB" id="Q0WNG6"/>
<dbReference type="PRO" id="PR:Q0WNG6"/>
<dbReference type="Proteomes" id="UP000006548">
    <property type="component" value="Chromosome 3"/>
</dbReference>
<dbReference type="ExpressionAtlas" id="Q0WNG6">
    <property type="expression patterns" value="baseline and differential"/>
</dbReference>
<dbReference type="GO" id="GO:0016020">
    <property type="term" value="C:membrane"/>
    <property type="evidence" value="ECO:0007669"/>
    <property type="project" value="UniProtKB-SubCell"/>
</dbReference>
<dbReference type="GO" id="GO:0016787">
    <property type="term" value="F:hydrolase activity"/>
    <property type="evidence" value="ECO:0007669"/>
    <property type="project" value="UniProtKB-KW"/>
</dbReference>
<dbReference type="GO" id="GO:0006644">
    <property type="term" value="P:phospholipid metabolic process"/>
    <property type="evidence" value="ECO:0007669"/>
    <property type="project" value="InterPro"/>
</dbReference>
<dbReference type="CDD" id="cd03390">
    <property type="entry name" value="PAP2_containing_1_like"/>
    <property type="match status" value="1"/>
</dbReference>
<dbReference type="FunFam" id="1.20.144.10:FF:000001">
    <property type="entry name" value="Lipid phosphate phosphatase 2"/>
    <property type="match status" value="1"/>
</dbReference>
<dbReference type="Gene3D" id="1.20.144.10">
    <property type="entry name" value="Phosphatidic acid phosphatase type 2/haloperoxidase"/>
    <property type="match status" value="1"/>
</dbReference>
<dbReference type="InterPro" id="IPR036938">
    <property type="entry name" value="P_Acid_Pase_2/haloperoxi_sf"/>
</dbReference>
<dbReference type="InterPro" id="IPR000326">
    <property type="entry name" value="P_Acid_Pase_2/haloperoxidase"/>
</dbReference>
<dbReference type="InterPro" id="IPR043216">
    <property type="entry name" value="PA_PP_rel"/>
</dbReference>
<dbReference type="PANTHER" id="PTHR10165">
    <property type="entry name" value="LIPID PHOSPHATE PHOSPHATASE"/>
    <property type="match status" value="1"/>
</dbReference>
<dbReference type="PANTHER" id="PTHR10165:SF187">
    <property type="entry name" value="LIPID PHOSPHATE PHOSPHATASE 4-RELATED"/>
    <property type="match status" value="1"/>
</dbReference>
<dbReference type="Pfam" id="PF01569">
    <property type="entry name" value="PAP2"/>
    <property type="match status" value="1"/>
</dbReference>
<dbReference type="SMART" id="SM00014">
    <property type="entry name" value="acidPPc"/>
    <property type="match status" value="1"/>
</dbReference>
<dbReference type="SUPFAM" id="SSF48317">
    <property type="entry name" value="Acid phosphatase/Vanadium-dependent haloperoxidase"/>
    <property type="match status" value="1"/>
</dbReference>
<evidence type="ECO:0000255" key="1"/>
<evidence type="ECO:0000256" key="2">
    <source>
        <dbReference type="SAM" id="MobiDB-lite"/>
    </source>
</evidence>
<evidence type="ECO:0000305" key="3"/>
<accession>Q0WNG6</accession>
<accession>Q8LAS9</accession>
<accession>Q9LJQ8</accession>
<name>LPP4_ARATH</name>
<organism>
    <name type="scientific">Arabidopsis thaliana</name>
    <name type="common">Mouse-ear cress</name>
    <dbReference type="NCBI Taxonomy" id="3702"/>
    <lineage>
        <taxon>Eukaryota</taxon>
        <taxon>Viridiplantae</taxon>
        <taxon>Streptophyta</taxon>
        <taxon>Embryophyta</taxon>
        <taxon>Tracheophyta</taxon>
        <taxon>Spermatophyta</taxon>
        <taxon>Magnoliopsida</taxon>
        <taxon>eudicotyledons</taxon>
        <taxon>Gunneridae</taxon>
        <taxon>Pentapetalae</taxon>
        <taxon>rosids</taxon>
        <taxon>malvids</taxon>
        <taxon>Brassicales</taxon>
        <taxon>Brassicaceae</taxon>
        <taxon>Camelineae</taxon>
        <taxon>Arabidopsis</taxon>
    </lineage>
</organism>
<gene>
    <name type="primary">LPP4</name>
    <name type="ordered locus">At3g18220</name>
    <name type="ORF">MIE15.1</name>
</gene>
<sequence length="308" mass="35102">MAKIMLGSHSVKSHGWKVAREHLCDWLILVVLGLIDIVLNVIEPFHRYIGPDMLTDLTFPFYEDTIPMWAVPIICILVPICIFIVYYYYRRDVYDLHHAILGIGFSCLVTGVTTDSIKDAVGRPRPNFFYRCFPNGKPKFHPDTKDVVCHGVKKIIKEGYKSFPSGHTSWSFAGLTFLAWYLSGKIKVFDRRGHVAKLCLVFLPILISILIGISRVDDYWHHWTDVFAGAIIGIFVASFSYLHFFPYPYDENGWAPHAYFRMLAERSTGRATTMTRTGSRGMLGNDVEPGNSASSPHDRHRESTDSDF</sequence>
<reference key="1">
    <citation type="journal article" date="2000" name="DNA Res.">
        <title>Structural analysis of Arabidopsis thaliana chromosome 3. II. Sequence features of the 4,251,695 bp regions covered by 90 P1, TAC and BAC clones.</title>
        <authorList>
            <person name="Kaneko T."/>
            <person name="Katoh T."/>
            <person name="Sato S."/>
            <person name="Nakamura Y."/>
            <person name="Asamizu E."/>
            <person name="Tabata S."/>
        </authorList>
    </citation>
    <scope>NUCLEOTIDE SEQUENCE [LARGE SCALE GENOMIC DNA]</scope>
    <source>
        <strain>cv. Columbia</strain>
    </source>
</reference>
<reference key="2">
    <citation type="journal article" date="2017" name="Plant J.">
        <title>Araport11: a complete reannotation of the Arabidopsis thaliana reference genome.</title>
        <authorList>
            <person name="Cheng C.Y."/>
            <person name="Krishnakumar V."/>
            <person name="Chan A.P."/>
            <person name="Thibaud-Nissen F."/>
            <person name="Schobel S."/>
            <person name="Town C.D."/>
        </authorList>
    </citation>
    <scope>GENOME REANNOTATION</scope>
    <source>
        <strain>cv. Columbia</strain>
    </source>
</reference>
<reference key="3">
    <citation type="submission" date="2006-07" db="EMBL/GenBank/DDBJ databases">
        <title>Large-scale analysis of RIKEN Arabidopsis full-length (RAFL) cDNAs.</title>
        <authorList>
            <person name="Totoki Y."/>
            <person name="Seki M."/>
            <person name="Ishida J."/>
            <person name="Nakajima M."/>
            <person name="Enju A."/>
            <person name="Kamiya A."/>
            <person name="Narusaka M."/>
            <person name="Shin-i T."/>
            <person name="Nakagawa M."/>
            <person name="Sakamoto N."/>
            <person name="Oishi K."/>
            <person name="Kohara Y."/>
            <person name="Kobayashi M."/>
            <person name="Toyoda A."/>
            <person name="Sakaki Y."/>
            <person name="Sakurai T."/>
            <person name="Iida K."/>
            <person name="Akiyama K."/>
            <person name="Satou M."/>
            <person name="Toyoda T."/>
            <person name="Konagaya A."/>
            <person name="Carninci P."/>
            <person name="Kawai J."/>
            <person name="Hayashizaki Y."/>
            <person name="Shinozaki K."/>
        </authorList>
    </citation>
    <scope>NUCLEOTIDE SEQUENCE [LARGE SCALE MRNA]</scope>
    <source>
        <strain>cv. Columbia</strain>
    </source>
</reference>
<reference key="4">
    <citation type="submission" date="2002-03" db="EMBL/GenBank/DDBJ databases">
        <title>Full-length cDNA from Arabidopsis thaliana.</title>
        <authorList>
            <person name="Brover V.V."/>
            <person name="Troukhan M.E."/>
            <person name="Alexandrov N.A."/>
            <person name="Lu Y.-P."/>
            <person name="Flavell R.B."/>
            <person name="Feldmann K.A."/>
        </authorList>
    </citation>
    <scope>NUCLEOTIDE SEQUENCE [LARGE SCALE MRNA]</scope>
</reference>
<proteinExistence type="evidence at transcript level"/>
<feature type="chain" id="PRO_0000425225" description="Probable lipid phosphate phosphatase 4">
    <location>
        <begin position="1"/>
        <end position="308"/>
    </location>
</feature>
<feature type="transmembrane region" description="Helical" evidence="1">
    <location>
        <begin position="26"/>
        <end position="46"/>
    </location>
</feature>
<feature type="transmembrane region" description="Helical" evidence="1">
    <location>
        <begin position="66"/>
        <end position="86"/>
    </location>
</feature>
<feature type="transmembrane region" description="Helical" evidence="1">
    <location>
        <begin position="93"/>
        <end position="113"/>
    </location>
</feature>
<feature type="transmembrane region" description="Helical" evidence="1">
    <location>
        <begin position="162"/>
        <end position="182"/>
    </location>
</feature>
<feature type="transmembrane region" description="Helical" evidence="1">
    <location>
        <begin position="193"/>
        <end position="213"/>
    </location>
</feature>
<feature type="transmembrane region" description="Helical" evidence="1">
    <location>
        <begin position="226"/>
        <end position="246"/>
    </location>
</feature>
<feature type="region of interest" description="Disordered" evidence="2">
    <location>
        <begin position="274"/>
        <end position="308"/>
    </location>
</feature>
<feature type="compositionally biased region" description="Basic and acidic residues" evidence="2">
    <location>
        <begin position="296"/>
        <end position="308"/>
    </location>
</feature>
<feature type="sequence conflict" description="In Ref. 1; BAB01172." evidence="3" ref="1">
    <original>KFH</original>
    <variation>VY</variation>
    <location>
        <begin position="139"/>
        <end position="141"/>
    </location>
</feature>
<feature type="sequence conflict" description="In Ref. 4; AAM65171." evidence="3" ref="4">
    <original>G</original>
    <variation>D</variation>
    <location>
        <position position="284"/>
    </location>
</feature>